<keyword id="KW-0028">Amino-acid biosynthesis</keyword>
<keyword id="KW-0963">Cytoplasm</keyword>
<keyword id="KW-0378">Hydrolase</keyword>
<keyword id="KW-0460">Magnesium</keyword>
<keyword id="KW-0479">Metal-binding</keyword>
<keyword id="KW-0486">Methionine biosynthesis</keyword>
<keyword id="KW-0539">Nucleus</keyword>
<keyword id="KW-1185">Reference proteome</keyword>
<sequence length="246" mass="27174">MPISFAAPIEVIVLDIEGTVCPISFVKTTLFPYFLEKLPSELSALTYPLKSTSNSPVEEICSQFPENVRVSSDSLLEYTTSLVNNDIKDPILKSLQGFIWKLGYENGELMAPVYEDAIEFVTDLSKTRKIYIYSSGSIKAQVLLFGHVKGANGSPVDMNRYLSGYYDITTAGFKQESGSYVSILKDIGYESKQSSVLFLSDNVREVDAAIQAGMNSLVVDRPGNAPLSEADKKSFSIIETFRDLKL</sequence>
<comment type="function">
    <text evidence="1">Bifunctional enzyme that catalyzes the enolization of 2,3-diketo-5-methylthiopentyl-1-phosphate (DK-MTP-1-P) into the intermediate 2-hydroxy-3-keto-5-methylthiopentenyl-1-phosphate (HK-MTPenyl-1-P), which is then dephosphorylated to form the acireductone 1,2-dihydroxy-3-keto-5-methylthiopentene (DHK-MTPene).</text>
</comment>
<comment type="catalytic activity">
    <reaction evidence="1">
        <text>5-methylsulfanyl-2,3-dioxopentyl phosphate + H2O = 1,2-dihydroxy-5-(methylsulfanyl)pent-1-en-3-one + phosphate</text>
        <dbReference type="Rhea" id="RHEA:21700"/>
        <dbReference type="ChEBI" id="CHEBI:15377"/>
        <dbReference type="ChEBI" id="CHEBI:43474"/>
        <dbReference type="ChEBI" id="CHEBI:49252"/>
        <dbReference type="ChEBI" id="CHEBI:58828"/>
        <dbReference type="EC" id="3.1.3.77"/>
    </reaction>
</comment>
<comment type="cofactor">
    <cofactor evidence="1">
        <name>Mg(2+)</name>
        <dbReference type="ChEBI" id="CHEBI:18420"/>
    </cofactor>
    <text evidence="1">Binds 1 Mg(2+) ion per subunit.</text>
</comment>
<comment type="pathway">
    <text evidence="1">Amino-acid biosynthesis; L-methionine biosynthesis via salvage pathway; L-methionine from S-methyl-5-thio-alpha-D-ribose 1-phosphate: step 3/6.</text>
</comment>
<comment type="pathway">
    <text evidence="1">Amino-acid biosynthesis; L-methionine biosynthesis via salvage pathway; L-methionine from S-methyl-5-thio-alpha-D-ribose 1-phosphate: step 4/6.</text>
</comment>
<comment type="subunit">
    <text evidence="1">Monomer.</text>
</comment>
<comment type="subcellular location">
    <subcellularLocation>
        <location evidence="1">Cytoplasm</location>
    </subcellularLocation>
    <subcellularLocation>
        <location evidence="1">Nucleus</location>
    </subcellularLocation>
</comment>
<comment type="similarity">
    <text evidence="1">Belongs to the HAD-like hydrolase superfamily. MasA/MtnC family.</text>
</comment>
<name>ENOPH_DEBHA</name>
<protein>
    <recommendedName>
        <fullName evidence="1">Enolase-phosphatase E1</fullName>
        <ecNumber evidence="1">3.1.3.77</ecNumber>
    </recommendedName>
    <alternativeName>
        <fullName evidence="1">2,3-diketo-5-methylthio-1-phosphopentane phosphatase</fullName>
    </alternativeName>
</protein>
<organism>
    <name type="scientific">Debaryomyces hansenii (strain ATCC 36239 / CBS 767 / BCRC 21394 / JCM 1990 / NBRC 0083 / IGC 2968)</name>
    <name type="common">Yeast</name>
    <name type="synonym">Torulaspora hansenii</name>
    <dbReference type="NCBI Taxonomy" id="284592"/>
    <lineage>
        <taxon>Eukaryota</taxon>
        <taxon>Fungi</taxon>
        <taxon>Dikarya</taxon>
        <taxon>Ascomycota</taxon>
        <taxon>Saccharomycotina</taxon>
        <taxon>Pichiomycetes</taxon>
        <taxon>Debaryomycetaceae</taxon>
        <taxon>Debaryomyces</taxon>
    </lineage>
</organism>
<reference key="1">
    <citation type="journal article" date="2004" name="Nature">
        <title>Genome evolution in yeasts.</title>
        <authorList>
            <person name="Dujon B."/>
            <person name="Sherman D."/>
            <person name="Fischer G."/>
            <person name="Durrens P."/>
            <person name="Casaregola S."/>
            <person name="Lafontaine I."/>
            <person name="de Montigny J."/>
            <person name="Marck C."/>
            <person name="Neuveglise C."/>
            <person name="Talla E."/>
            <person name="Goffard N."/>
            <person name="Frangeul L."/>
            <person name="Aigle M."/>
            <person name="Anthouard V."/>
            <person name="Babour A."/>
            <person name="Barbe V."/>
            <person name="Barnay S."/>
            <person name="Blanchin S."/>
            <person name="Beckerich J.-M."/>
            <person name="Beyne E."/>
            <person name="Bleykasten C."/>
            <person name="Boisrame A."/>
            <person name="Boyer J."/>
            <person name="Cattolico L."/>
            <person name="Confanioleri F."/>
            <person name="de Daruvar A."/>
            <person name="Despons L."/>
            <person name="Fabre E."/>
            <person name="Fairhead C."/>
            <person name="Ferry-Dumazet H."/>
            <person name="Groppi A."/>
            <person name="Hantraye F."/>
            <person name="Hennequin C."/>
            <person name="Jauniaux N."/>
            <person name="Joyet P."/>
            <person name="Kachouri R."/>
            <person name="Kerrest A."/>
            <person name="Koszul R."/>
            <person name="Lemaire M."/>
            <person name="Lesur I."/>
            <person name="Ma L."/>
            <person name="Muller H."/>
            <person name="Nicaud J.-M."/>
            <person name="Nikolski M."/>
            <person name="Oztas S."/>
            <person name="Ozier-Kalogeropoulos O."/>
            <person name="Pellenz S."/>
            <person name="Potier S."/>
            <person name="Richard G.-F."/>
            <person name="Straub M.-L."/>
            <person name="Suleau A."/>
            <person name="Swennen D."/>
            <person name="Tekaia F."/>
            <person name="Wesolowski-Louvel M."/>
            <person name="Westhof E."/>
            <person name="Wirth B."/>
            <person name="Zeniou-Meyer M."/>
            <person name="Zivanovic Y."/>
            <person name="Bolotin-Fukuhara M."/>
            <person name="Thierry A."/>
            <person name="Bouchier C."/>
            <person name="Caudron B."/>
            <person name="Scarpelli C."/>
            <person name="Gaillardin C."/>
            <person name="Weissenbach J."/>
            <person name="Wincker P."/>
            <person name="Souciet J.-L."/>
        </authorList>
    </citation>
    <scope>NUCLEOTIDE SEQUENCE [LARGE SCALE GENOMIC DNA]</scope>
    <source>
        <strain>ATCC 36239 / CBS 767 / BCRC 21394 / JCM 1990 / NBRC 0083 / IGC 2968</strain>
    </source>
</reference>
<evidence type="ECO:0000255" key="1">
    <source>
        <dbReference type="HAMAP-Rule" id="MF_03117"/>
    </source>
</evidence>
<dbReference type="EC" id="3.1.3.77" evidence="1"/>
<dbReference type="EMBL" id="CR382134">
    <property type="protein sequence ID" value="CAG85136.2"/>
    <property type="molecule type" value="Genomic_DNA"/>
</dbReference>
<dbReference type="RefSeq" id="XP_457142.2">
    <property type="nucleotide sequence ID" value="XM_457142.1"/>
</dbReference>
<dbReference type="SMR" id="Q6BXC7"/>
<dbReference type="FunCoup" id="Q6BXC7">
    <property type="interactions" value="679"/>
</dbReference>
<dbReference type="STRING" id="284592.Q6BXC7"/>
<dbReference type="GeneID" id="2913169"/>
<dbReference type="KEGG" id="dha:DEHA2B04158g"/>
<dbReference type="VEuPathDB" id="FungiDB:DEHA2B04158g"/>
<dbReference type="eggNOG" id="KOG2630">
    <property type="taxonomic scope" value="Eukaryota"/>
</dbReference>
<dbReference type="HOGENOM" id="CLU_023273_1_1_1"/>
<dbReference type="InParanoid" id="Q6BXC7"/>
<dbReference type="OMA" id="LQGMVWE"/>
<dbReference type="OrthoDB" id="272500at2759"/>
<dbReference type="UniPathway" id="UPA00904">
    <property type="reaction ID" value="UER00876"/>
</dbReference>
<dbReference type="UniPathway" id="UPA00904">
    <property type="reaction ID" value="UER00877"/>
</dbReference>
<dbReference type="Proteomes" id="UP000000599">
    <property type="component" value="Chromosome B"/>
</dbReference>
<dbReference type="GO" id="GO:0005737">
    <property type="term" value="C:cytoplasm"/>
    <property type="evidence" value="ECO:0007669"/>
    <property type="project" value="UniProtKB-SubCell"/>
</dbReference>
<dbReference type="GO" id="GO:0005634">
    <property type="term" value="C:nucleus"/>
    <property type="evidence" value="ECO:0007669"/>
    <property type="project" value="UniProtKB-SubCell"/>
</dbReference>
<dbReference type="GO" id="GO:0043874">
    <property type="term" value="F:acireductone synthase activity"/>
    <property type="evidence" value="ECO:0007669"/>
    <property type="project" value="UniProtKB-EC"/>
</dbReference>
<dbReference type="GO" id="GO:0000287">
    <property type="term" value="F:magnesium ion binding"/>
    <property type="evidence" value="ECO:0007669"/>
    <property type="project" value="UniProtKB-UniRule"/>
</dbReference>
<dbReference type="GO" id="GO:0019509">
    <property type="term" value="P:L-methionine salvage from methylthioadenosine"/>
    <property type="evidence" value="ECO:0007669"/>
    <property type="project" value="UniProtKB-UniRule"/>
</dbReference>
<dbReference type="Gene3D" id="1.10.720.60">
    <property type="match status" value="1"/>
</dbReference>
<dbReference type="Gene3D" id="3.40.50.1000">
    <property type="entry name" value="HAD superfamily/HAD-like"/>
    <property type="match status" value="1"/>
</dbReference>
<dbReference type="HAMAP" id="MF_03117">
    <property type="entry name" value="Salvage_MtnC_euk"/>
    <property type="match status" value="1"/>
</dbReference>
<dbReference type="InterPro" id="IPR023943">
    <property type="entry name" value="Enolase-ppase_E1"/>
</dbReference>
<dbReference type="InterPro" id="IPR027511">
    <property type="entry name" value="ENOPH1_eukaryotes"/>
</dbReference>
<dbReference type="InterPro" id="IPR036412">
    <property type="entry name" value="HAD-like_sf"/>
</dbReference>
<dbReference type="InterPro" id="IPR023214">
    <property type="entry name" value="HAD_sf"/>
</dbReference>
<dbReference type="NCBIfam" id="TIGR01691">
    <property type="entry name" value="enolase-ppase"/>
    <property type="match status" value="1"/>
</dbReference>
<dbReference type="PANTHER" id="PTHR20371">
    <property type="entry name" value="ENOLASE-PHOSPHATASE E1"/>
    <property type="match status" value="1"/>
</dbReference>
<dbReference type="PANTHER" id="PTHR20371:SF1">
    <property type="entry name" value="ENOLASE-PHOSPHATASE E1"/>
    <property type="match status" value="1"/>
</dbReference>
<dbReference type="SFLD" id="SFLDG01133">
    <property type="entry name" value="C1.5.4:_Enolase-phosphatase_Li"/>
    <property type="match status" value="1"/>
</dbReference>
<dbReference type="SFLD" id="SFLDS00003">
    <property type="entry name" value="Haloacid_Dehalogenase"/>
    <property type="match status" value="1"/>
</dbReference>
<dbReference type="SUPFAM" id="SSF56784">
    <property type="entry name" value="HAD-like"/>
    <property type="match status" value="1"/>
</dbReference>
<gene>
    <name evidence="1" type="primary">UTR4</name>
    <name type="ordered locus">DEHA2B04158g</name>
</gene>
<feature type="chain" id="PRO_0000393999" description="Enolase-phosphatase E1">
    <location>
        <begin position="1"/>
        <end position="246"/>
    </location>
</feature>
<feature type="binding site" evidence="1">
    <location>
        <position position="15"/>
    </location>
    <ligand>
        <name>Mg(2+)</name>
        <dbReference type="ChEBI" id="CHEBI:18420"/>
    </ligand>
</feature>
<feature type="binding site" evidence="1">
    <location>
        <position position="17"/>
    </location>
    <ligand>
        <name>Mg(2+)</name>
        <dbReference type="ChEBI" id="CHEBI:18420"/>
    </ligand>
</feature>
<feature type="binding site" evidence="1">
    <location>
        <begin position="134"/>
        <end position="135"/>
    </location>
    <ligand>
        <name>substrate</name>
    </ligand>
</feature>
<feature type="binding site" evidence="1">
    <location>
        <position position="174"/>
    </location>
    <ligand>
        <name>substrate</name>
    </ligand>
</feature>
<feature type="binding site" evidence="1">
    <location>
        <position position="201"/>
    </location>
    <ligand>
        <name>Mg(2+)</name>
        <dbReference type="ChEBI" id="CHEBI:18420"/>
    </ligand>
</feature>
<accession>Q6BXC7</accession>
<proteinExistence type="inferred from homology"/>